<name>KCY_VIBVY</name>
<protein>
    <recommendedName>
        <fullName evidence="1">Cytidylate kinase</fullName>
        <shortName evidence="1">CK</shortName>
        <ecNumber evidence="1">2.7.4.25</ecNumber>
    </recommendedName>
    <alternativeName>
        <fullName evidence="1">Cytidine monophosphate kinase</fullName>
        <shortName evidence="1">CMP kinase</shortName>
    </alternativeName>
</protein>
<feature type="chain" id="PRO_0000132001" description="Cytidylate kinase">
    <location>
        <begin position="1"/>
        <end position="226"/>
    </location>
</feature>
<feature type="binding site" evidence="1">
    <location>
        <begin position="12"/>
        <end position="20"/>
    </location>
    <ligand>
        <name>ATP</name>
        <dbReference type="ChEBI" id="CHEBI:30616"/>
    </ligand>
</feature>
<organism>
    <name type="scientific">Vibrio vulnificus (strain YJ016)</name>
    <dbReference type="NCBI Taxonomy" id="196600"/>
    <lineage>
        <taxon>Bacteria</taxon>
        <taxon>Pseudomonadati</taxon>
        <taxon>Pseudomonadota</taxon>
        <taxon>Gammaproteobacteria</taxon>
        <taxon>Vibrionales</taxon>
        <taxon>Vibrionaceae</taxon>
        <taxon>Vibrio</taxon>
    </lineage>
</organism>
<proteinExistence type="inferred from homology"/>
<reference key="1">
    <citation type="journal article" date="2003" name="Genome Res.">
        <title>Comparative genome analysis of Vibrio vulnificus, a marine pathogen.</title>
        <authorList>
            <person name="Chen C.-Y."/>
            <person name="Wu K.-M."/>
            <person name="Chang Y.-C."/>
            <person name="Chang C.-H."/>
            <person name="Tsai H.-C."/>
            <person name="Liao T.-L."/>
            <person name="Liu Y.-M."/>
            <person name="Chen H.-J."/>
            <person name="Shen A.B.-T."/>
            <person name="Li J.-C."/>
            <person name="Su T.-L."/>
            <person name="Shao C.-P."/>
            <person name="Lee C.-T."/>
            <person name="Hor L.-I."/>
            <person name="Tsai S.-F."/>
        </authorList>
    </citation>
    <scope>NUCLEOTIDE SEQUENCE [LARGE SCALE GENOMIC DNA]</scope>
    <source>
        <strain>YJ016</strain>
    </source>
</reference>
<dbReference type="EC" id="2.7.4.25" evidence="1"/>
<dbReference type="EMBL" id="BA000037">
    <property type="protein sequence ID" value="BAC94063.1"/>
    <property type="status" value="ALT_INIT"/>
    <property type="molecule type" value="Genomic_DNA"/>
</dbReference>
<dbReference type="RefSeq" id="WP_043877124.1">
    <property type="nucleotide sequence ID" value="NC_005139.1"/>
</dbReference>
<dbReference type="SMR" id="Q7MLX7"/>
<dbReference type="STRING" id="672.VV93_v1c12150"/>
<dbReference type="KEGG" id="vvy:VV1299"/>
<dbReference type="PATRIC" id="fig|196600.6.peg.1290"/>
<dbReference type="eggNOG" id="COG0283">
    <property type="taxonomic scope" value="Bacteria"/>
</dbReference>
<dbReference type="HOGENOM" id="CLU_079959_2_0_6"/>
<dbReference type="Proteomes" id="UP000002675">
    <property type="component" value="Chromosome I"/>
</dbReference>
<dbReference type="GO" id="GO:0005829">
    <property type="term" value="C:cytosol"/>
    <property type="evidence" value="ECO:0007669"/>
    <property type="project" value="TreeGrafter"/>
</dbReference>
<dbReference type="GO" id="GO:0005524">
    <property type="term" value="F:ATP binding"/>
    <property type="evidence" value="ECO:0007669"/>
    <property type="project" value="UniProtKB-UniRule"/>
</dbReference>
<dbReference type="GO" id="GO:0036430">
    <property type="term" value="F:CMP kinase activity"/>
    <property type="evidence" value="ECO:0007669"/>
    <property type="project" value="RHEA"/>
</dbReference>
<dbReference type="GO" id="GO:0036431">
    <property type="term" value="F:dCMP kinase activity"/>
    <property type="evidence" value="ECO:0007669"/>
    <property type="project" value="RHEA"/>
</dbReference>
<dbReference type="GO" id="GO:0015949">
    <property type="term" value="P:nucleobase-containing small molecule interconversion"/>
    <property type="evidence" value="ECO:0007669"/>
    <property type="project" value="TreeGrafter"/>
</dbReference>
<dbReference type="GO" id="GO:0006220">
    <property type="term" value="P:pyrimidine nucleotide metabolic process"/>
    <property type="evidence" value="ECO:0007669"/>
    <property type="project" value="UniProtKB-UniRule"/>
</dbReference>
<dbReference type="CDD" id="cd02020">
    <property type="entry name" value="CMPK"/>
    <property type="match status" value="1"/>
</dbReference>
<dbReference type="FunFam" id="3.40.50.300:FF:000262">
    <property type="entry name" value="Cytidylate kinase"/>
    <property type="match status" value="1"/>
</dbReference>
<dbReference type="Gene3D" id="3.40.50.300">
    <property type="entry name" value="P-loop containing nucleotide triphosphate hydrolases"/>
    <property type="match status" value="1"/>
</dbReference>
<dbReference type="HAMAP" id="MF_00238">
    <property type="entry name" value="Cytidyl_kinase_type1"/>
    <property type="match status" value="1"/>
</dbReference>
<dbReference type="InterPro" id="IPR003136">
    <property type="entry name" value="Cytidylate_kin"/>
</dbReference>
<dbReference type="InterPro" id="IPR011994">
    <property type="entry name" value="Cytidylate_kinase_dom"/>
</dbReference>
<dbReference type="InterPro" id="IPR027417">
    <property type="entry name" value="P-loop_NTPase"/>
</dbReference>
<dbReference type="NCBIfam" id="TIGR00017">
    <property type="entry name" value="cmk"/>
    <property type="match status" value="1"/>
</dbReference>
<dbReference type="PANTHER" id="PTHR21299:SF2">
    <property type="entry name" value="CYTIDYLATE KINASE"/>
    <property type="match status" value="1"/>
</dbReference>
<dbReference type="PANTHER" id="PTHR21299">
    <property type="entry name" value="CYTIDYLATE KINASE/PANTOATE-BETA-ALANINE LIGASE"/>
    <property type="match status" value="1"/>
</dbReference>
<dbReference type="Pfam" id="PF02224">
    <property type="entry name" value="Cytidylate_kin"/>
    <property type="match status" value="1"/>
</dbReference>
<dbReference type="SUPFAM" id="SSF52540">
    <property type="entry name" value="P-loop containing nucleoside triphosphate hydrolases"/>
    <property type="match status" value="1"/>
</dbReference>
<evidence type="ECO:0000255" key="1">
    <source>
        <dbReference type="HAMAP-Rule" id="MF_00238"/>
    </source>
</evidence>
<evidence type="ECO:0000305" key="2"/>
<comment type="catalytic activity">
    <reaction evidence="1">
        <text>CMP + ATP = CDP + ADP</text>
        <dbReference type="Rhea" id="RHEA:11600"/>
        <dbReference type="ChEBI" id="CHEBI:30616"/>
        <dbReference type="ChEBI" id="CHEBI:58069"/>
        <dbReference type="ChEBI" id="CHEBI:60377"/>
        <dbReference type="ChEBI" id="CHEBI:456216"/>
        <dbReference type="EC" id="2.7.4.25"/>
    </reaction>
</comment>
<comment type="catalytic activity">
    <reaction evidence="1">
        <text>dCMP + ATP = dCDP + ADP</text>
        <dbReference type="Rhea" id="RHEA:25094"/>
        <dbReference type="ChEBI" id="CHEBI:30616"/>
        <dbReference type="ChEBI" id="CHEBI:57566"/>
        <dbReference type="ChEBI" id="CHEBI:58593"/>
        <dbReference type="ChEBI" id="CHEBI:456216"/>
        <dbReference type="EC" id="2.7.4.25"/>
    </reaction>
</comment>
<comment type="subcellular location">
    <subcellularLocation>
        <location evidence="1">Cytoplasm</location>
    </subcellularLocation>
</comment>
<comment type="similarity">
    <text evidence="1">Belongs to the cytidylate kinase family. Type 1 subfamily.</text>
</comment>
<comment type="sequence caution" evidence="2">
    <conflict type="erroneous initiation">
        <sequence resource="EMBL-CDS" id="BAC94063"/>
    </conflict>
</comment>
<gene>
    <name evidence="1" type="primary">cmk</name>
    <name type="ordered locus">VV1299</name>
</gene>
<sequence>MSSQTPVVTVDGPSGAGKGTLCMLLSKKLGFQLLDSGAIYRVLALAAIHHGVDTESEDALVPLATHLDVQFVAEGDLVKVILEGEDVSKELRKEETGMAASKVAALPRVREALLRRQRAFEAAPGLVADGRDMGTVVFPNAKAKIFLDASAEERAHRRLKQLQDKGLDVRFDDLLSEIQERDDRDRNRPVAPLCPAEDALVLDSTSMSIDEVVEKALQYIESKLAE</sequence>
<keyword id="KW-0067">ATP-binding</keyword>
<keyword id="KW-0963">Cytoplasm</keyword>
<keyword id="KW-0418">Kinase</keyword>
<keyword id="KW-0547">Nucleotide-binding</keyword>
<keyword id="KW-0808">Transferase</keyword>
<accession>Q7MLX7</accession>